<accession>Q48BG1</accession>
<reference key="1">
    <citation type="journal article" date="2005" name="J. Bacteriol.">
        <title>Whole-genome sequence analysis of Pseudomonas syringae pv. phaseolicola 1448A reveals divergence among pathovars in genes involved in virulence and transposition.</title>
        <authorList>
            <person name="Joardar V."/>
            <person name="Lindeberg M."/>
            <person name="Jackson R.W."/>
            <person name="Selengut J."/>
            <person name="Dodson R."/>
            <person name="Brinkac L.M."/>
            <person name="Daugherty S.C."/>
            <person name="DeBoy R.T."/>
            <person name="Durkin A.S."/>
            <person name="Gwinn Giglio M."/>
            <person name="Madupu R."/>
            <person name="Nelson W.C."/>
            <person name="Rosovitz M.J."/>
            <person name="Sullivan S.A."/>
            <person name="Crabtree J."/>
            <person name="Creasy T."/>
            <person name="Davidsen T.M."/>
            <person name="Haft D.H."/>
            <person name="Zafar N."/>
            <person name="Zhou L."/>
            <person name="Halpin R."/>
            <person name="Holley T."/>
            <person name="Khouri H.M."/>
            <person name="Feldblyum T.V."/>
            <person name="White O."/>
            <person name="Fraser C.M."/>
            <person name="Chatterjee A.K."/>
            <person name="Cartinhour S."/>
            <person name="Schneider D."/>
            <person name="Mansfield J.W."/>
            <person name="Collmer A."/>
            <person name="Buell R."/>
        </authorList>
    </citation>
    <scope>NUCLEOTIDE SEQUENCE [LARGE SCALE GENOMIC DNA]</scope>
    <source>
        <strain>1448A / Race 6</strain>
    </source>
</reference>
<name>ATPF_PSE14</name>
<evidence type="ECO:0000255" key="1">
    <source>
        <dbReference type="HAMAP-Rule" id="MF_01398"/>
    </source>
</evidence>
<comment type="function">
    <text evidence="1">F(1)F(0) ATP synthase produces ATP from ADP in the presence of a proton or sodium gradient. F-type ATPases consist of two structural domains, F(1) containing the extramembraneous catalytic core and F(0) containing the membrane proton channel, linked together by a central stalk and a peripheral stalk. During catalysis, ATP synthesis in the catalytic domain of F(1) is coupled via a rotary mechanism of the central stalk subunits to proton translocation.</text>
</comment>
<comment type="function">
    <text evidence="1">Component of the F(0) channel, it forms part of the peripheral stalk, linking F(1) to F(0).</text>
</comment>
<comment type="subunit">
    <text evidence="1">F-type ATPases have 2 components, F(1) - the catalytic core - and F(0) - the membrane proton channel. F(1) has five subunits: alpha(3), beta(3), gamma(1), delta(1), epsilon(1). F(0) has three main subunits: a(1), b(2) and c(10-14). The alpha and beta chains form an alternating ring which encloses part of the gamma chain. F(1) is attached to F(0) by a central stalk formed by the gamma and epsilon chains, while a peripheral stalk is formed by the delta and b chains.</text>
</comment>
<comment type="subcellular location">
    <subcellularLocation>
        <location evidence="1">Cell inner membrane</location>
        <topology evidence="1">Single-pass membrane protein</topology>
    </subcellularLocation>
</comment>
<comment type="similarity">
    <text evidence="1">Belongs to the ATPase B chain family.</text>
</comment>
<sequence>MNINATLIGQSVAFFIFVIFCMKFVWPPVIAALHERQKKIADGLDAASRAARDLELAQEKAGQQLREAKAQAAEIIEQAKKRGTQIVDEARETARVEADRVKAQAQAEIEQELNGVKDALRAQLGSLAVNGAEKILGATIDQNAHAELVNKLAAEI</sequence>
<protein>
    <recommendedName>
        <fullName evidence="1">ATP synthase subunit b</fullName>
    </recommendedName>
    <alternativeName>
        <fullName evidence="1">ATP synthase F(0) sector subunit b</fullName>
    </alternativeName>
    <alternativeName>
        <fullName evidence="1">ATPase subunit I</fullName>
    </alternativeName>
    <alternativeName>
        <fullName evidence="1">F-type ATPase subunit b</fullName>
        <shortName evidence="1">F-ATPase subunit b</shortName>
    </alternativeName>
</protein>
<dbReference type="EMBL" id="CP000058">
    <property type="protein sequence ID" value="AAZ36273.1"/>
    <property type="molecule type" value="Genomic_DNA"/>
</dbReference>
<dbReference type="RefSeq" id="WP_002555986.1">
    <property type="nucleotide sequence ID" value="NC_005773.3"/>
</dbReference>
<dbReference type="SMR" id="Q48BG1"/>
<dbReference type="KEGG" id="psp:PSPPH_5211"/>
<dbReference type="eggNOG" id="COG0711">
    <property type="taxonomic scope" value="Bacteria"/>
</dbReference>
<dbReference type="HOGENOM" id="CLU_079215_4_5_6"/>
<dbReference type="Proteomes" id="UP000000551">
    <property type="component" value="Chromosome"/>
</dbReference>
<dbReference type="GO" id="GO:0005886">
    <property type="term" value="C:plasma membrane"/>
    <property type="evidence" value="ECO:0007669"/>
    <property type="project" value="UniProtKB-SubCell"/>
</dbReference>
<dbReference type="GO" id="GO:0045259">
    <property type="term" value="C:proton-transporting ATP synthase complex"/>
    <property type="evidence" value="ECO:0007669"/>
    <property type="project" value="UniProtKB-KW"/>
</dbReference>
<dbReference type="GO" id="GO:0046933">
    <property type="term" value="F:proton-transporting ATP synthase activity, rotational mechanism"/>
    <property type="evidence" value="ECO:0007669"/>
    <property type="project" value="UniProtKB-UniRule"/>
</dbReference>
<dbReference type="GO" id="GO:0046961">
    <property type="term" value="F:proton-transporting ATPase activity, rotational mechanism"/>
    <property type="evidence" value="ECO:0007669"/>
    <property type="project" value="TreeGrafter"/>
</dbReference>
<dbReference type="CDD" id="cd06503">
    <property type="entry name" value="ATP-synt_Fo_b"/>
    <property type="match status" value="1"/>
</dbReference>
<dbReference type="FunFam" id="1.20.5.620:FF:000001">
    <property type="entry name" value="ATP synthase subunit b"/>
    <property type="match status" value="1"/>
</dbReference>
<dbReference type="Gene3D" id="1.20.5.620">
    <property type="entry name" value="F1F0 ATP synthase subunit B, membrane domain"/>
    <property type="match status" value="1"/>
</dbReference>
<dbReference type="HAMAP" id="MF_01398">
    <property type="entry name" value="ATP_synth_b_bprime"/>
    <property type="match status" value="1"/>
</dbReference>
<dbReference type="InterPro" id="IPR028987">
    <property type="entry name" value="ATP_synth_B-like_membr_sf"/>
</dbReference>
<dbReference type="InterPro" id="IPR002146">
    <property type="entry name" value="ATP_synth_b/b'su_bac/chlpt"/>
</dbReference>
<dbReference type="InterPro" id="IPR005864">
    <property type="entry name" value="ATP_synth_F0_bsu_bac"/>
</dbReference>
<dbReference type="InterPro" id="IPR050059">
    <property type="entry name" value="ATP_synthase_B_chain"/>
</dbReference>
<dbReference type="NCBIfam" id="TIGR01144">
    <property type="entry name" value="ATP_synt_b"/>
    <property type="match status" value="1"/>
</dbReference>
<dbReference type="NCBIfam" id="NF004411">
    <property type="entry name" value="PRK05759.1-2"/>
    <property type="match status" value="1"/>
</dbReference>
<dbReference type="NCBIfam" id="NF004413">
    <property type="entry name" value="PRK05759.1-4"/>
    <property type="match status" value="1"/>
</dbReference>
<dbReference type="PANTHER" id="PTHR33445:SF1">
    <property type="entry name" value="ATP SYNTHASE SUBUNIT B"/>
    <property type="match status" value="1"/>
</dbReference>
<dbReference type="PANTHER" id="PTHR33445">
    <property type="entry name" value="ATP SYNTHASE SUBUNIT B', CHLOROPLASTIC"/>
    <property type="match status" value="1"/>
</dbReference>
<dbReference type="Pfam" id="PF00430">
    <property type="entry name" value="ATP-synt_B"/>
    <property type="match status" value="1"/>
</dbReference>
<dbReference type="SUPFAM" id="SSF81573">
    <property type="entry name" value="F1F0 ATP synthase subunit B, membrane domain"/>
    <property type="match status" value="1"/>
</dbReference>
<gene>
    <name evidence="1" type="primary">atpF</name>
    <name type="ordered locus">PSPPH_5211</name>
</gene>
<proteinExistence type="inferred from homology"/>
<organism>
    <name type="scientific">Pseudomonas savastanoi pv. phaseolicola (strain 1448A / Race 6)</name>
    <name type="common">Pseudomonas syringae pv. phaseolicola (strain 1448A / Race 6)</name>
    <dbReference type="NCBI Taxonomy" id="264730"/>
    <lineage>
        <taxon>Bacteria</taxon>
        <taxon>Pseudomonadati</taxon>
        <taxon>Pseudomonadota</taxon>
        <taxon>Gammaproteobacteria</taxon>
        <taxon>Pseudomonadales</taxon>
        <taxon>Pseudomonadaceae</taxon>
        <taxon>Pseudomonas</taxon>
    </lineage>
</organism>
<keyword id="KW-0066">ATP synthesis</keyword>
<keyword id="KW-0997">Cell inner membrane</keyword>
<keyword id="KW-1003">Cell membrane</keyword>
<keyword id="KW-0138">CF(0)</keyword>
<keyword id="KW-0375">Hydrogen ion transport</keyword>
<keyword id="KW-0406">Ion transport</keyword>
<keyword id="KW-0472">Membrane</keyword>
<keyword id="KW-0812">Transmembrane</keyword>
<keyword id="KW-1133">Transmembrane helix</keyword>
<keyword id="KW-0813">Transport</keyword>
<feature type="chain" id="PRO_0000368694" description="ATP synthase subunit b">
    <location>
        <begin position="1"/>
        <end position="156"/>
    </location>
</feature>
<feature type="transmembrane region" description="Helical" evidence="1">
    <location>
        <begin position="12"/>
        <end position="32"/>
    </location>
</feature>